<evidence type="ECO:0000255" key="1">
    <source>
        <dbReference type="HAMAP-Rule" id="MF_00031"/>
    </source>
</evidence>
<proteinExistence type="inferred from homology"/>
<comment type="function">
    <text evidence="1">The RuvA-RuvB-RuvC complex processes Holliday junction (HJ) DNA during genetic recombination and DNA repair, while the RuvA-RuvB complex plays an important role in the rescue of blocked DNA replication forks via replication fork reversal (RFR). RuvA specifically binds to HJ cruciform DNA, conferring on it an open structure. The RuvB hexamer acts as an ATP-dependent pump, pulling dsDNA into and through the RuvAB complex. HJ branch migration allows RuvC to scan DNA until it finds its consensus sequence, where it cleaves and resolves the cruciform DNA.</text>
</comment>
<comment type="subunit">
    <text evidence="1">Homotetramer. Forms an RuvA(8)-RuvB(12)-Holliday junction (HJ) complex. HJ DNA is sandwiched between 2 RuvA tetramers; dsDNA enters through RuvA and exits via RuvB. An RuvB hexamer assembles on each DNA strand where it exits the tetramer. Each RuvB hexamer is contacted by two RuvA subunits (via domain III) on 2 adjacent RuvB subunits; this complex drives branch migration. In the full resolvosome a probable DNA-RuvA(4)-RuvB(12)-RuvC(2) complex forms which resolves the HJ.</text>
</comment>
<comment type="subcellular location">
    <subcellularLocation>
        <location evidence="1">Cytoplasm</location>
    </subcellularLocation>
</comment>
<comment type="domain">
    <text evidence="1">Has three domains with a flexible linker between the domains II and III and assumes an 'L' shape. Domain III is highly mobile and contacts RuvB.</text>
</comment>
<comment type="similarity">
    <text evidence="1">Belongs to the RuvA family.</text>
</comment>
<reference key="1">
    <citation type="journal article" date="2006" name="Genome Res.">
        <title>Skewed genomic variability in strains of the toxigenic bacterial pathogen, Clostridium perfringens.</title>
        <authorList>
            <person name="Myers G.S.A."/>
            <person name="Rasko D.A."/>
            <person name="Cheung J.K."/>
            <person name="Ravel J."/>
            <person name="Seshadri R."/>
            <person name="DeBoy R.T."/>
            <person name="Ren Q."/>
            <person name="Varga J."/>
            <person name="Awad M.M."/>
            <person name="Brinkac L.M."/>
            <person name="Daugherty S.C."/>
            <person name="Haft D.H."/>
            <person name="Dodson R.J."/>
            <person name="Madupu R."/>
            <person name="Nelson W.C."/>
            <person name="Rosovitz M.J."/>
            <person name="Sullivan S.A."/>
            <person name="Khouri H."/>
            <person name="Dimitrov G.I."/>
            <person name="Watkins K.L."/>
            <person name="Mulligan S."/>
            <person name="Benton J."/>
            <person name="Radune D."/>
            <person name="Fisher D.J."/>
            <person name="Atkins H.S."/>
            <person name="Hiscox T."/>
            <person name="Jost B.H."/>
            <person name="Billington S.J."/>
            <person name="Songer J.G."/>
            <person name="McClane B.A."/>
            <person name="Titball R.W."/>
            <person name="Rood J.I."/>
            <person name="Melville S.B."/>
            <person name="Paulsen I.T."/>
        </authorList>
    </citation>
    <scope>NUCLEOTIDE SEQUENCE [LARGE SCALE GENOMIC DNA]</scope>
    <source>
        <strain>SM101 / Type A</strain>
    </source>
</reference>
<organism>
    <name type="scientific">Clostridium perfringens (strain SM101 / Type A)</name>
    <dbReference type="NCBI Taxonomy" id="289380"/>
    <lineage>
        <taxon>Bacteria</taxon>
        <taxon>Bacillati</taxon>
        <taxon>Bacillota</taxon>
        <taxon>Clostridia</taxon>
        <taxon>Eubacteriales</taxon>
        <taxon>Clostridiaceae</taxon>
        <taxon>Clostridium</taxon>
    </lineage>
</organism>
<keyword id="KW-0963">Cytoplasm</keyword>
<keyword id="KW-0227">DNA damage</keyword>
<keyword id="KW-0233">DNA recombination</keyword>
<keyword id="KW-0234">DNA repair</keyword>
<keyword id="KW-0238">DNA-binding</keyword>
<accession>Q0SRN2</accession>
<feature type="chain" id="PRO_1000002434" description="Holliday junction branch migration complex subunit RuvA">
    <location>
        <begin position="1"/>
        <end position="201"/>
    </location>
</feature>
<feature type="region of interest" description="Domain I" evidence="1">
    <location>
        <begin position="1"/>
        <end position="64"/>
    </location>
</feature>
<feature type="region of interest" description="Domain II" evidence="1">
    <location>
        <begin position="65"/>
        <end position="143"/>
    </location>
</feature>
<feature type="region of interest" description="Flexible linker" evidence="1">
    <location>
        <begin position="144"/>
        <end position="152"/>
    </location>
</feature>
<feature type="region of interest" description="Domain III" evidence="1">
    <location>
        <begin position="153"/>
        <end position="201"/>
    </location>
</feature>
<sequence>MYEYIRGQFQGISKDYVVIELNNIGYRIFTSGNTMSNMPKVGDEVLLYLEQIVREDFIGLYGFTTKEELEMFKLLLSINGVGAKAALSLLSISTVNNLKYAIMMGDEKHITRAPGIGKKTAQRIILELKDKLKPDELTSEEEQLIEGINDNSDYSFNINETLSALMALGYTEKEAQKALEKVDKTLSIENMIKESLKLLMR</sequence>
<protein>
    <recommendedName>
        <fullName evidence="1">Holliday junction branch migration complex subunit RuvA</fullName>
    </recommendedName>
</protein>
<gene>
    <name evidence="1" type="primary">ruvA</name>
    <name type="ordered locus">CPR_1915</name>
</gene>
<name>RUVA_CLOPS</name>
<dbReference type="EMBL" id="CP000312">
    <property type="protein sequence ID" value="ABG85660.1"/>
    <property type="molecule type" value="Genomic_DNA"/>
</dbReference>
<dbReference type="RefSeq" id="WP_011592787.1">
    <property type="nucleotide sequence ID" value="NC_008262.1"/>
</dbReference>
<dbReference type="SMR" id="Q0SRN2"/>
<dbReference type="KEGG" id="cpr:CPR_1915"/>
<dbReference type="Proteomes" id="UP000001824">
    <property type="component" value="Chromosome"/>
</dbReference>
<dbReference type="GO" id="GO:0005737">
    <property type="term" value="C:cytoplasm"/>
    <property type="evidence" value="ECO:0007669"/>
    <property type="project" value="UniProtKB-SubCell"/>
</dbReference>
<dbReference type="GO" id="GO:0009379">
    <property type="term" value="C:Holliday junction helicase complex"/>
    <property type="evidence" value="ECO:0007669"/>
    <property type="project" value="InterPro"/>
</dbReference>
<dbReference type="GO" id="GO:0048476">
    <property type="term" value="C:Holliday junction resolvase complex"/>
    <property type="evidence" value="ECO:0007669"/>
    <property type="project" value="UniProtKB-UniRule"/>
</dbReference>
<dbReference type="GO" id="GO:0005524">
    <property type="term" value="F:ATP binding"/>
    <property type="evidence" value="ECO:0007669"/>
    <property type="project" value="InterPro"/>
</dbReference>
<dbReference type="GO" id="GO:0000400">
    <property type="term" value="F:four-way junction DNA binding"/>
    <property type="evidence" value="ECO:0007669"/>
    <property type="project" value="UniProtKB-UniRule"/>
</dbReference>
<dbReference type="GO" id="GO:0009378">
    <property type="term" value="F:four-way junction helicase activity"/>
    <property type="evidence" value="ECO:0007669"/>
    <property type="project" value="InterPro"/>
</dbReference>
<dbReference type="GO" id="GO:0006310">
    <property type="term" value="P:DNA recombination"/>
    <property type="evidence" value="ECO:0007669"/>
    <property type="project" value="UniProtKB-UniRule"/>
</dbReference>
<dbReference type="GO" id="GO:0006281">
    <property type="term" value="P:DNA repair"/>
    <property type="evidence" value="ECO:0007669"/>
    <property type="project" value="UniProtKB-UniRule"/>
</dbReference>
<dbReference type="CDD" id="cd14332">
    <property type="entry name" value="UBA_RuvA_C"/>
    <property type="match status" value="1"/>
</dbReference>
<dbReference type="Gene3D" id="1.10.150.20">
    <property type="entry name" value="5' to 3' exonuclease, C-terminal subdomain"/>
    <property type="match status" value="1"/>
</dbReference>
<dbReference type="Gene3D" id="1.10.8.10">
    <property type="entry name" value="DNA helicase RuvA subunit, C-terminal domain"/>
    <property type="match status" value="1"/>
</dbReference>
<dbReference type="Gene3D" id="2.40.50.140">
    <property type="entry name" value="Nucleic acid-binding proteins"/>
    <property type="match status" value="1"/>
</dbReference>
<dbReference type="HAMAP" id="MF_00031">
    <property type="entry name" value="DNA_HJ_migration_RuvA"/>
    <property type="match status" value="1"/>
</dbReference>
<dbReference type="InterPro" id="IPR013849">
    <property type="entry name" value="DNA_helicase_Holl-junc_RuvA_I"/>
</dbReference>
<dbReference type="InterPro" id="IPR003583">
    <property type="entry name" value="Hlx-hairpin-Hlx_DNA-bd_motif"/>
</dbReference>
<dbReference type="InterPro" id="IPR012340">
    <property type="entry name" value="NA-bd_OB-fold"/>
</dbReference>
<dbReference type="InterPro" id="IPR000085">
    <property type="entry name" value="RuvA"/>
</dbReference>
<dbReference type="InterPro" id="IPR010994">
    <property type="entry name" value="RuvA_2-like"/>
</dbReference>
<dbReference type="InterPro" id="IPR011114">
    <property type="entry name" value="RuvA_C"/>
</dbReference>
<dbReference type="InterPro" id="IPR036267">
    <property type="entry name" value="RuvA_C_sf"/>
</dbReference>
<dbReference type="NCBIfam" id="TIGR00084">
    <property type="entry name" value="ruvA"/>
    <property type="match status" value="1"/>
</dbReference>
<dbReference type="Pfam" id="PF14520">
    <property type="entry name" value="HHH_5"/>
    <property type="match status" value="1"/>
</dbReference>
<dbReference type="Pfam" id="PF07499">
    <property type="entry name" value="RuvA_C"/>
    <property type="match status" value="1"/>
</dbReference>
<dbReference type="Pfam" id="PF01330">
    <property type="entry name" value="RuvA_N"/>
    <property type="match status" value="1"/>
</dbReference>
<dbReference type="SMART" id="SM00278">
    <property type="entry name" value="HhH1"/>
    <property type="match status" value="2"/>
</dbReference>
<dbReference type="SUPFAM" id="SSF46929">
    <property type="entry name" value="DNA helicase RuvA subunit, C-terminal domain"/>
    <property type="match status" value="1"/>
</dbReference>
<dbReference type="SUPFAM" id="SSF50249">
    <property type="entry name" value="Nucleic acid-binding proteins"/>
    <property type="match status" value="1"/>
</dbReference>
<dbReference type="SUPFAM" id="SSF47781">
    <property type="entry name" value="RuvA domain 2-like"/>
    <property type="match status" value="1"/>
</dbReference>